<sequence>MIALPRNRRPLFLAVFAYCAALLAFGLYLQHYQGIEPCPMCIMQRYAFALVGVIALVAGLHGPRGAGVRVYGGLLLLTALAGGSVAARQTWMQLYPPEIPECGPGLEYMLESFPLTSALPMIFRGAGDCSAIDWTFLGLSLANWSLLNFGAAALLALWLLFGRRVR</sequence>
<reference key="1">
    <citation type="journal article" date="2006" name="Nat. Biotechnol.">
        <title>Complete genome of the mutualistic, N2-fixing grass endophyte Azoarcus sp. strain BH72.</title>
        <authorList>
            <person name="Krause A."/>
            <person name="Ramakumar A."/>
            <person name="Bartels D."/>
            <person name="Battistoni F."/>
            <person name="Bekel T."/>
            <person name="Boch J."/>
            <person name="Boehm M."/>
            <person name="Friedrich F."/>
            <person name="Hurek T."/>
            <person name="Krause L."/>
            <person name="Linke B."/>
            <person name="McHardy A.C."/>
            <person name="Sarkar A."/>
            <person name="Schneiker S."/>
            <person name="Syed A.A."/>
            <person name="Thauer R."/>
            <person name="Vorhoelter F.-J."/>
            <person name="Weidner S."/>
            <person name="Puehler A."/>
            <person name="Reinhold-Hurek B."/>
            <person name="Kaiser O."/>
            <person name="Goesmann A."/>
        </authorList>
    </citation>
    <scope>NUCLEOTIDE SEQUENCE [LARGE SCALE GENOMIC DNA]</scope>
    <source>
        <strain>BH72</strain>
    </source>
</reference>
<comment type="function">
    <text evidence="1">Required for disulfide bond formation in some periplasmic proteins. Acts by oxidizing the DsbA protein.</text>
</comment>
<comment type="subcellular location">
    <subcellularLocation>
        <location evidence="1">Cell inner membrane</location>
        <topology evidence="1">Multi-pass membrane protein</topology>
    </subcellularLocation>
</comment>
<comment type="similarity">
    <text evidence="1">Belongs to the DsbB family.</text>
</comment>
<dbReference type="EMBL" id="AM406670">
    <property type="protein sequence ID" value="CAL95988.1"/>
    <property type="molecule type" value="Genomic_DNA"/>
</dbReference>
<dbReference type="RefSeq" id="WP_011767095.1">
    <property type="nucleotide sequence ID" value="NC_008702.1"/>
</dbReference>
<dbReference type="SMR" id="A1KAY2"/>
<dbReference type="STRING" id="62928.azo3372"/>
<dbReference type="KEGG" id="azo:azo3372"/>
<dbReference type="eggNOG" id="COG1495">
    <property type="taxonomic scope" value="Bacteria"/>
</dbReference>
<dbReference type="HOGENOM" id="CLU_098660_1_1_4"/>
<dbReference type="Proteomes" id="UP000002588">
    <property type="component" value="Chromosome"/>
</dbReference>
<dbReference type="GO" id="GO:0005886">
    <property type="term" value="C:plasma membrane"/>
    <property type="evidence" value="ECO:0007669"/>
    <property type="project" value="UniProtKB-SubCell"/>
</dbReference>
<dbReference type="GO" id="GO:0009055">
    <property type="term" value="F:electron transfer activity"/>
    <property type="evidence" value="ECO:0007669"/>
    <property type="project" value="UniProtKB-UniRule"/>
</dbReference>
<dbReference type="GO" id="GO:0015035">
    <property type="term" value="F:protein-disulfide reductase activity"/>
    <property type="evidence" value="ECO:0007669"/>
    <property type="project" value="UniProtKB-UniRule"/>
</dbReference>
<dbReference type="GO" id="GO:0006457">
    <property type="term" value="P:protein folding"/>
    <property type="evidence" value="ECO:0007669"/>
    <property type="project" value="InterPro"/>
</dbReference>
<dbReference type="Gene3D" id="1.20.1550.10">
    <property type="entry name" value="DsbB-like"/>
    <property type="match status" value="1"/>
</dbReference>
<dbReference type="HAMAP" id="MF_00286">
    <property type="entry name" value="DsbB"/>
    <property type="match status" value="1"/>
</dbReference>
<dbReference type="InterPro" id="IPR003752">
    <property type="entry name" value="DiS_bond_form_DsbB/BdbC"/>
</dbReference>
<dbReference type="InterPro" id="IPR022920">
    <property type="entry name" value="Disulphide_bond_form_DsbB"/>
</dbReference>
<dbReference type="InterPro" id="IPR050183">
    <property type="entry name" value="DsbB"/>
</dbReference>
<dbReference type="InterPro" id="IPR023380">
    <property type="entry name" value="DsbB-like_sf"/>
</dbReference>
<dbReference type="PANTHER" id="PTHR36570">
    <property type="entry name" value="DISULFIDE BOND FORMATION PROTEIN B"/>
    <property type="match status" value="1"/>
</dbReference>
<dbReference type="PANTHER" id="PTHR36570:SF3">
    <property type="entry name" value="DISULFIDE BOND FORMATION PROTEIN B"/>
    <property type="match status" value="1"/>
</dbReference>
<dbReference type="Pfam" id="PF02600">
    <property type="entry name" value="DsbB"/>
    <property type="match status" value="1"/>
</dbReference>
<dbReference type="SUPFAM" id="SSF158442">
    <property type="entry name" value="DsbB-like"/>
    <property type="match status" value="1"/>
</dbReference>
<protein>
    <recommendedName>
        <fullName evidence="1">Disulfide bond formation protein B</fullName>
    </recommendedName>
    <alternativeName>
        <fullName evidence="1">Disulfide oxidoreductase</fullName>
    </alternativeName>
</protein>
<gene>
    <name evidence="1" type="primary">dsbB</name>
    <name type="ordered locus">azo3372</name>
</gene>
<keyword id="KW-0997">Cell inner membrane</keyword>
<keyword id="KW-1003">Cell membrane</keyword>
<keyword id="KW-0143">Chaperone</keyword>
<keyword id="KW-1015">Disulfide bond</keyword>
<keyword id="KW-0249">Electron transport</keyword>
<keyword id="KW-0472">Membrane</keyword>
<keyword id="KW-0560">Oxidoreductase</keyword>
<keyword id="KW-0676">Redox-active center</keyword>
<keyword id="KW-1185">Reference proteome</keyword>
<keyword id="KW-0812">Transmembrane</keyword>
<keyword id="KW-1133">Transmembrane helix</keyword>
<keyword id="KW-0813">Transport</keyword>
<feature type="chain" id="PRO_0000298338" description="Disulfide bond formation protein B">
    <location>
        <begin position="1"/>
        <end position="166"/>
    </location>
</feature>
<feature type="topological domain" description="Cytoplasmic" evidence="1">
    <location>
        <begin position="1"/>
        <end position="11"/>
    </location>
</feature>
<feature type="transmembrane region" description="Helical" evidence="1">
    <location>
        <begin position="12"/>
        <end position="28"/>
    </location>
</feature>
<feature type="topological domain" description="Periplasmic" evidence="1">
    <location>
        <begin position="29"/>
        <end position="46"/>
    </location>
</feature>
<feature type="transmembrane region" description="Helical" evidence="1">
    <location>
        <begin position="47"/>
        <end position="63"/>
    </location>
</feature>
<feature type="topological domain" description="Cytoplasmic" evidence="1">
    <location>
        <begin position="64"/>
        <end position="70"/>
    </location>
</feature>
<feature type="transmembrane region" description="Helical" evidence="1">
    <location>
        <begin position="71"/>
        <end position="87"/>
    </location>
</feature>
<feature type="topological domain" description="Periplasmic" evidence="1">
    <location>
        <begin position="88"/>
        <end position="143"/>
    </location>
</feature>
<feature type="transmembrane region" description="Helical" evidence="1">
    <location>
        <begin position="144"/>
        <end position="162"/>
    </location>
</feature>
<feature type="topological domain" description="Cytoplasmic" evidence="1">
    <location>
        <begin position="163"/>
        <end position="166"/>
    </location>
</feature>
<feature type="disulfide bond" description="Redox-active" evidence="1">
    <location>
        <begin position="38"/>
        <end position="41"/>
    </location>
</feature>
<feature type="disulfide bond" description="Redox-active" evidence="1">
    <location>
        <begin position="102"/>
        <end position="129"/>
    </location>
</feature>
<accession>A1KAY2</accession>
<name>DSBB_AZOSB</name>
<evidence type="ECO:0000255" key="1">
    <source>
        <dbReference type="HAMAP-Rule" id="MF_00286"/>
    </source>
</evidence>
<organism>
    <name type="scientific">Azoarcus sp. (strain BH72)</name>
    <dbReference type="NCBI Taxonomy" id="418699"/>
    <lineage>
        <taxon>Bacteria</taxon>
        <taxon>Pseudomonadati</taxon>
        <taxon>Pseudomonadota</taxon>
        <taxon>Betaproteobacteria</taxon>
        <taxon>Rhodocyclales</taxon>
        <taxon>Zoogloeaceae</taxon>
        <taxon>Azoarcus</taxon>
    </lineage>
</organism>
<proteinExistence type="inferred from homology"/>